<organism>
    <name type="scientific">Synechocystis sp. (strain ATCC 27184 / PCC 6803 / Kazusa)</name>
    <dbReference type="NCBI Taxonomy" id="1111708"/>
    <lineage>
        <taxon>Bacteria</taxon>
        <taxon>Bacillati</taxon>
        <taxon>Cyanobacteriota</taxon>
        <taxon>Cyanophyceae</taxon>
        <taxon>Synechococcales</taxon>
        <taxon>Merismopediaceae</taxon>
        <taxon>Synechocystis</taxon>
    </lineage>
</organism>
<evidence type="ECO:0000256" key="1">
    <source>
        <dbReference type="SAM" id="MobiDB-lite"/>
    </source>
</evidence>
<evidence type="ECO:0000305" key="2"/>
<keyword id="KW-1185">Reference proteome</keyword>
<protein>
    <recommendedName>
        <fullName>Uncharacterized protein sll1770</fullName>
    </recommendedName>
</protein>
<name>Y1770_SYNY3</name>
<reference key="1">
    <citation type="journal article" date="1996" name="DNA Res.">
        <title>Sequence analysis of the genome of the unicellular cyanobacterium Synechocystis sp. strain PCC6803. II. Sequence determination of the entire genome and assignment of potential protein-coding regions.</title>
        <authorList>
            <person name="Kaneko T."/>
            <person name="Sato S."/>
            <person name="Kotani H."/>
            <person name="Tanaka A."/>
            <person name="Asamizu E."/>
            <person name="Nakamura Y."/>
            <person name="Miyajima N."/>
            <person name="Hirosawa M."/>
            <person name="Sugiura M."/>
            <person name="Sasamoto S."/>
            <person name="Kimura T."/>
            <person name="Hosouchi T."/>
            <person name="Matsuno A."/>
            <person name="Muraki A."/>
            <person name="Nakazaki N."/>
            <person name="Naruo K."/>
            <person name="Okumura S."/>
            <person name="Shimpo S."/>
            <person name="Takeuchi C."/>
            <person name="Wada T."/>
            <person name="Watanabe A."/>
            <person name="Yamada M."/>
            <person name="Yasuda M."/>
            <person name="Tabata S."/>
        </authorList>
    </citation>
    <scope>NUCLEOTIDE SEQUENCE [LARGE SCALE GENOMIC DNA]</scope>
    <source>
        <strain>ATCC 27184 / PCC 6803 / Kazusa</strain>
    </source>
</reference>
<comment type="similarity">
    <text evidence="2">Belongs to the protein kinase superfamily. ADCK protein kinase family.</text>
</comment>
<sequence>MSALSTKLEPTNSYSESLPPQRRSPLEAEGRYRWNRGNYSITRRRIDIWGFVLTLLYQFWLNGKKWSYAGGYTEEKLQQRRRRQAKWIRENLLSLGPTFIKVGQLFSTRSDLFPAEYVEELSKLQDEVPAFSYEQAAGIIEEELGKPIAKLYRSFDPVPLAAASLGQVHKAQLHTGEDVVVKVQRPGLKKLFTIDLAILKKIAQYFQNHPKWGRGRDWNGIYEECCKILWQETDYLREGRSADTFRRNFRGEDWVKVPRVYWRYTSTQILTLEYLPGIKISHYDALEAAGLERKELAQLGARAYLFQLLNHGFFHADPHPGNLAVSPEAGELIFYDFGMMGEITPDTKNKLMDTLFGVAEKNAERIVNSLVALGALKETEDMGPIRRSVQFLLDNFMDKPFEEQSITKISDDLYEIAYDQPFRFPATFTFVMRAFSTLEGVGKGLDPDFNFMAVAQPFALQIMNNSNGFNPAGNIMDELGRQAVQVGNSALGLPRRIEDSLDRLDRGDIRVRVRSTETDRLLRRMGTMQMGTNYVLFTCALVLSATLLFVNNYFMAAAVVLLMSLVPAFALWRLLKRLERQDRMF</sequence>
<feature type="chain" id="PRO_0000200733" description="Uncharacterized protein sll1770">
    <location>
        <begin position="1"/>
        <end position="585"/>
    </location>
</feature>
<feature type="region of interest" description="Disordered" evidence="1">
    <location>
        <begin position="1"/>
        <end position="23"/>
    </location>
</feature>
<feature type="compositionally biased region" description="Polar residues" evidence="1">
    <location>
        <begin position="1"/>
        <end position="18"/>
    </location>
</feature>
<dbReference type="EMBL" id="BA000022">
    <property type="protein sequence ID" value="BAA17672.1"/>
    <property type="molecule type" value="Genomic_DNA"/>
</dbReference>
<dbReference type="PIR" id="S77114">
    <property type="entry name" value="S77114"/>
</dbReference>
<dbReference type="SMR" id="P73627"/>
<dbReference type="IntAct" id="P73627">
    <property type="interactions" value="2"/>
</dbReference>
<dbReference type="STRING" id="1148.gene:10498539"/>
<dbReference type="PaxDb" id="1148-1652753"/>
<dbReference type="EnsemblBacteria" id="BAA17672">
    <property type="protein sequence ID" value="BAA17672"/>
    <property type="gene ID" value="BAA17672"/>
</dbReference>
<dbReference type="KEGG" id="syn:sll1770"/>
<dbReference type="eggNOG" id="COG0661">
    <property type="taxonomic scope" value="Bacteria"/>
</dbReference>
<dbReference type="InParanoid" id="P73627"/>
<dbReference type="PhylomeDB" id="P73627"/>
<dbReference type="Proteomes" id="UP000001425">
    <property type="component" value="Chromosome"/>
</dbReference>
<dbReference type="GO" id="GO:0005524">
    <property type="term" value="F:ATP binding"/>
    <property type="evidence" value="ECO:0007669"/>
    <property type="project" value="InterPro"/>
</dbReference>
<dbReference type="GO" id="GO:0004672">
    <property type="term" value="F:protein kinase activity"/>
    <property type="evidence" value="ECO:0007669"/>
    <property type="project" value="InterPro"/>
</dbReference>
<dbReference type="CDD" id="cd05121">
    <property type="entry name" value="ABC1_ADCK3-like"/>
    <property type="match status" value="1"/>
</dbReference>
<dbReference type="InterPro" id="IPR004147">
    <property type="entry name" value="ABC1_dom"/>
</dbReference>
<dbReference type="InterPro" id="IPR011009">
    <property type="entry name" value="Kinase-like_dom_sf"/>
</dbReference>
<dbReference type="InterPro" id="IPR000719">
    <property type="entry name" value="Prot_kinase_dom"/>
</dbReference>
<dbReference type="InterPro" id="IPR050154">
    <property type="entry name" value="UbiB_kinase"/>
</dbReference>
<dbReference type="PANTHER" id="PTHR10566">
    <property type="entry name" value="CHAPERONE-ACTIVITY OF BC1 COMPLEX CABC1 -RELATED"/>
    <property type="match status" value="1"/>
</dbReference>
<dbReference type="PANTHER" id="PTHR10566:SF113">
    <property type="entry name" value="PROTEIN ACTIVITY OF BC1 COMPLEX KINASE 7, CHLOROPLASTIC"/>
    <property type="match status" value="1"/>
</dbReference>
<dbReference type="Pfam" id="PF03109">
    <property type="entry name" value="ABC1"/>
    <property type="match status" value="1"/>
</dbReference>
<dbReference type="SUPFAM" id="SSF56112">
    <property type="entry name" value="Protein kinase-like (PK-like)"/>
    <property type="match status" value="1"/>
</dbReference>
<accession>P73627</accession>
<gene>
    <name type="ordered locus">sll1770</name>
</gene>
<proteinExistence type="inferred from homology"/>